<comment type="function">
    <text evidence="5">May act as a carbohydrate transporter.</text>
</comment>
<comment type="subcellular location">
    <subcellularLocation>
        <location evidence="1">Cell membrane</location>
        <topology evidence="1">Lipid-anchor</topology>
        <topology evidence="1">GPI-anchor</topology>
    </subcellularLocation>
</comment>
<comment type="similarity">
    <text evidence="6">Belongs to the early nodulin-like (ENODL) family.</text>
</comment>
<name>ENL17_ARATH</name>
<proteinExistence type="evidence at transcript level"/>
<accession>Q39131</accession>
<accession>Q8H7E7</accession>
<protein>
    <recommendedName>
        <fullName evidence="4">Early nodulin-like protein 17</fullName>
        <shortName evidence="4">AtENODL17</shortName>
    </recommendedName>
    <alternativeName>
        <fullName evidence="6">Lamin-like protein ENODL17</fullName>
    </alternativeName>
    <alternativeName>
        <fullName evidence="6">Phytocyanin-like protein ENODL17</fullName>
    </alternativeName>
</protein>
<gene>
    <name evidence="4" type="primary">ENODL17</name>
    <name evidence="4" type="synonym">EN17</name>
    <name evidence="7" type="ordered locus">At5g15350</name>
    <name evidence="8" type="ORF">F8M21.240</name>
</gene>
<feature type="signal peptide" evidence="1">
    <location>
        <begin position="1"/>
        <end position="26"/>
    </location>
</feature>
<feature type="chain" id="PRO_0000251279" description="Early nodulin-like protein 17">
    <location>
        <begin position="27"/>
        <end position="141"/>
    </location>
</feature>
<feature type="propeptide" id="PRO_0000457726" description="Removed in mature form" evidence="1">
    <location>
        <begin position="142"/>
        <end position="172"/>
    </location>
</feature>
<feature type="domain" description="Phytocyanin" evidence="3">
    <location>
        <begin position="27"/>
        <end position="127"/>
    </location>
</feature>
<feature type="lipid moiety-binding region" description="GPI-anchor amidated glycine" evidence="1">
    <location>
        <position position="141"/>
    </location>
</feature>
<feature type="glycosylation site" description="N-linked (GlcNAc...) asparagine" evidence="2">
    <location>
        <position position="42"/>
    </location>
</feature>
<feature type="glycosylation site" description="N-linked (GlcNAc...) asparagine" evidence="2">
    <location>
        <position position="73"/>
    </location>
</feature>
<feature type="glycosylation site" description="N-linked (GlcNAc...) asparagine" evidence="2">
    <location>
        <position position="88"/>
    </location>
</feature>
<feature type="glycosylation site" description="N-linked (GlcNAc...) asparagine" evidence="2">
    <location>
        <position position="101"/>
    </location>
</feature>
<feature type="disulfide bond" evidence="3">
    <location>
        <begin position="80"/>
        <end position="115"/>
    </location>
</feature>
<keyword id="KW-1003">Cell membrane</keyword>
<keyword id="KW-1015">Disulfide bond</keyword>
<keyword id="KW-0325">Glycoprotein</keyword>
<keyword id="KW-0336">GPI-anchor</keyword>
<keyword id="KW-0449">Lipoprotein</keyword>
<keyword id="KW-0472">Membrane</keyword>
<keyword id="KW-1185">Reference proteome</keyword>
<keyword id="KW-0732">Signal</keyword>
<sequence>MARFTVLITAVVLAFLMAAPMPGVTAKKYTVGENKFWNPNINYTIWAQGKHFYLGDWLYFVFDRNQHNILEVNKTDYEGCIADHPIRNWTRGAGRDIVTLNQTKHYYLLDGKGGCYGGMKLSVKVEKLPPPPKSAPVKNIGSVSMVTGLAQFMIPVSLFAFPAMWDVISRMW</sequence>
<evidence type="ECO:0000255" key="1"/>
<evidence type="ECO:0000255" key="2">
    <source>
        <dbReference type="PROSITE-ProRule" id="PRU00498"/>
    </source>
</evidence>
<evidence type="ECO:0000255" key="3">
    <source>
        <dbReference type="PROSITE-ProRule" id="PRU00818"/>
    </source>
</evidence>
<evidence type="ECO:0000303" key="4">
    <source>
    </source>
</evidence>
<evidence type="ECO:0000303" key="5">
    <source>
    </source>
</evidence>
<evidence type="ECO:0000305" key="6"/>
<evidence type="ECO:0000312" key="7">
    <source>
        <dbReference type="Araport" id="AT5G15350"/>
    </source>
</evidence>
<evidence type="ECO:0000312" key="8">
    <source>
        <dbReference type="EMBL" id="CAB89345.1"/>
    </source>
</evidence>
<reference key="1">
    <citation type="submission" date="1996-04" db="EMBL/GenBank/DDBJ databases">
        <title>An investigation of nuclear lamin homologues in plants: a novel family of blue copper-binding type proteins.</title>
        <authorList>
            <person name="Willis G."/>
        </authorList>
    </citation>
    <scope>NUCLEOTIDE SEQUENCE [MRNA]</scope>
    <source>
        <strain>cv. Columbia</strain>
    </source>
</reference>
<reference key="2">
    <citation type="submission" date="1996-11" db="EMBL/GenBank/DDBJ databases">
        <authorList>
            <person name="Nersissian A.M."/>
            <person name="Valentine J.S."/>
        </authorList>
    </citation>
    <scope>NUCLEOTIDE SEQUENCE [MRNA]</scope>
</reference>
<reference key="3">
    <citation type="journal article" date="2000" name="Nature">
        <title>Sequence and analysis of chromosome 5 of the plant Arabidopsis thaliana.</title>
        <authorList>
            <person name="Tabata S."/>
            <person name="Kaneko T."/>
            <person name="Nakamura Y."/>
            <person name="Kotani H."/>
            <person name="Kato T."/>
            <person name="Asamizu E."/>
            <person name="Miyajima N."/>
            <person name="Sasamoto S."/>
            <person name="Kimura T."/>
            <person name="Hosouchi T."/>
            <person name="Kawashima K."/>
            <person name="Kohara M."/>
            <person name="Matsumoto M."/>
            <person name="Matsuno A."/>
            <person name="Muraki A."/>
            <person name="Nakayama S."/>
            <person name="Nakazaki N."/>
            <person name="Naruo K."/>
            <person name="Okumura S."/>
            <person name="Shinpo S."/>
            <person name="Takeuchi C."/>
            <person name="Wada T."/>
            <person name="Watanabe A."/>
            <person name="Yamada M."/>
            <person name="Yasuda M."/>
            <person name="Sato S."/>
            <person name="de la Bastide M."/>
            <person name="Huang E."/>
            <person name="Spiegel L."/>
            <person name="Gnoj L."/>
            <person name="O'Shaughnessy A."/>
            <person name="Preston R."/>
            <person name="Habermann K."/>
            <person name="Murray J."/>
            <person name="Johnson D."/>
            <person name="Rohlfing T."/>
            <person name="Nelson J."/>
            <person name="Stoneking T."/>
            <person name="Pepin K."/>
            <person name="Spieth J."/>
            <person name="Sekhon M."/>
            <person name="Armstrong J."/>
            <person name="Becker M."/>
            <person name="Belter E."/>
            <person name="Cordum H."/>
            <person name="Cordes M."/>
            <person name="Courtney L."/>
            <person name="Courtney W."/>
            <person name="Dante M."/>
            <person name="Du H."/>
            <person name="Edwards J."/>
            <person name="Fryman J."/>
            <person name="Haakensen B."/>
            <person name="Lamar E."/>
            <person name="Latreille P."/>
            <person name="Leonard S."/>
            <person name="Meyer R."/>
            <person name="Mulvaney E."/>
            <person name="Ozersky P."/>
            <person name="Riley A."/>
            <person name="Strowmatt C."/>
            <person name="Wagner-McPherson C."/>
            <person name="Wollam A."/>
            <person name="Yoakum M."/>
            <person name="Bell M."/>
            <person name="Dedhia N."/>
            <person name="Parnell L."/>
            <person name="Shah R."/>
            <person name="Rodriguez M."/>
            <person name="Hoon See L."/>
            <person name="Vil D."/>
            <person name="Baker J."/>
            <person name="Kirchoff K."/>
            <person name="Toth K."/>
            <person name="King L."/>
            <person name="Bahret A."/>
            <person name="Miller B."/>
            <person name="Marra M.A."/>
            <person name="Martienssen R."/>
            <person name="McCombie W.R."/>
            <person name="Wilson R.K."/>
            <person name="Murphy G."/>
            <person name="Bancroft I."/>
            <person name="Volckaert G."/>
            <person name="Wambutt R."/>
            <person name="Duesterhoeft A."/>
            <person name="Stiekema W."/>
            <person name="Pohl T."/>
            <person name="Entian K.-D."/>
            <person name="Terryn N."/>
            <person name="Hartley N."/>
            <person name="Bent E."/>
            <person name="Johnson S."/>
            <person name="Langham S.-A."/>
            <person name="McCullagh B."/>
            <person name="Robben J."/>
            <person name="Grymonprez B."/>
            <person name="Zimmermann W."/>
            <person name="Ramsperger U."/>
            <person name="Wedler H."/>
            <person name="Balke K."/>
            <person name="Wedler E."/>
            <person name="Peters S."/>
            <person name="van Staveren M."/>
            <person name="Dirkse W."/>
            <person name="Mooijman P."/>
            <person name="Klein Lankhorst R."/>
            <person name="Weitzenegger T."/>
            <person name="Bothe G."/>
            <person name="Rose M."/>
            <person name="Hauf J."/>
            <person name="Berneiser S."/>
            <person name="Hempel S."/>
            <person name="Feldpausch M."/>
            <person name="Lamberth S."/>
            <person name="Villarroel R."/>
            <person name="Gielen J."/>
            <person name="Ardiles W."/>
            <person name="Bents O."/>
            <person name="Lemcke K."/>
            <person name="Kolesov G."/>
            <person name="Mayer K.F.X."/>
            <person name="Rudd S."/>
            <person name="Schoof H."/>
            <person name="Schueller C."/>
            <person name="Zaccaria P."/>
            <person name="Mewes H.-W."/>
            <person name="Bevan M."/>
            <person name="Fransz P.F."/>
        </authorList>
    </citation>
    <scope>NUCLEOTIDE SEQUENCE [LARGE SCALE GENOMIC DNA]</scope>
    <source>
        <strain>cv. Columbia</strain>
    </source>
</reference>
<reference key="4">
    <citation type="journal article" date="2017" name="Plant J.">
        <title>Araport11: a complete reannotation of the Arabidopsis thaliana reference genome.</title>
        <authorList>
            <person name="Cheng C.Y."/>
            <person name="Krishnakumar V."/>
            <person name="Chan A.P."/>
            <person name="Thibaud-Nissen F."/>
            <person name="Schobel S."/>
            <person name="Town C.D."/>
        </authorList>
    </citation>
    <scope>GENOME REANNOTATION</scope>
    <source>
        <strain>cv. Columbia</strain>
    </source>
</reference>
<reference key="5">
    <citation type="journal article" date="2003" name="Science">
        <title>Empirical analysis of transcriptional activity in the Arabidopsis genome.</title>
        <authorList>
            <person name="Yamada K."/>
            <person name="Lim J."/>
            <person name="Dale J.M."/>
            <person name="Chen H."/>
            <person name="Shinn P."/>
            <person name="Palm C.J."/>
            <person name="Southwick A.M."/>
            <person name="Wu H.C."/>
            <person name="Kim C.J."/>
            <person name="Nguyen M."/>
            <person name="Pham P.K."/>
            <person name="Cheuk R.F."/>
            <person name="Karlin-Newmann G."/>
            <person name="Liu S.X."/>
            <person name="Lam B."/>
            <person name="Sakano H."/>
            <person name="Wu T."/>
            <person name="Yu G."/>
            <person name="Miranda M."/>
            <person name="Quach H.L."/>
            <person name="Tripp M."/>
            <person name="Chang C.H."/>
            <person name="Lee J.M."/>
            <person name="Toriumi M.J."/>
            <person name="Chan M.M."/>
            <person name="Tang C.C."/>
            <person name="Onodera C.S."/>
            <person name="Deng J.M."/>
            <person name="Akiyama K."/>
            <person name="Ansari Y."/>
            <person name="Arakawa T."/>
            <person name="Banh J."/>
            <person name="Banno F."/>
            <person name="Bowser L."/>
            <person name="Brooks S.Y."/>
            <person name="Carninci P."/>
            <person name="Chao Q."/>
            <person name="Choy N."/>
            <person name="Enju A."/>
            <person name="Goldsmith A.D."/>
            <person name="Gurjal M."/>
            <person name="Hansen N.F."/>
            <person name="Hayashizaki Y."/>
            <person name="Johnson-Hopson C."/>
            <person name="Hsuan V.W."/>
            <person name="Iida K."/>
            <person name="Karnes M."/>
            <person name="Khan S."/>
            <person name="Koesema E."/>
            <person name="Ishida J."/>
            <person name="Jiang P.X."/>
            <person name="Jones T."/>
            <person name="Kawai J."/>
            <person name="Kamiya A."/>
            <person name="Meyers C."/>
            <person name="Nakajima M."/>
            <person name="Narusaka M."/>
            <person name="Seki M."/>
            <person name="Sakurai T."/>
            <person name="Satou M."/>
            <person name="Tamse R."/>
            <person name="Vaysberg M."/>
            <person name="Wallender E.K."/>
            <person name="Wong C."/>
            <person name="Yamamura Y."/>
            <person name="Yuan S."/>
            <person name="Shinozaki K."/>
            <person name="Davis R.W."/>
            <person name="Theologis A."/>
            <person name="Ecker J.R."/>
        </authorList>
    </citation>
    <scope>NUCLEOTIDE SEQUENCE [LARGE SCALE MRNA]</scope>
    <source>
        <strain>cv. Columbia</strain>
    </source>
</reference>
<reference key="6">
    <citation type="submission" date="1998-08" db="EMBL/GenBank/DDBJ databases">
        <title>Signal peptide selection derived cDNAs from Arabidopsis thaliana leaves and guard cells.</title>
        <authorList>
            <person name="Stracke R."/>
            <person name="Palme K."/>
        </authorList>
    </citation>
    <scope>NUCLEOTIDE SEQUENCE [LARGE SCALE MRNA] OF 1-155</scope>
    <source>
        <tissue>Leaf</tissue>
    </source>
</reference>
<reference key="7">
    <citation type="journal article" date="2003" name="Plant Physiol.">
        <title>Identification of glycosylphosphatidylinositol-anchored proteins in Arabidopsis. A proteomic and genomic analysis.</title>
        <authorList>
            <person name="Borner G.H.H."/>
            <person name="Lilley K.S."/>
            <person name="Stevens T.J."/>
            <person name="Dupree P."/>
        </authorList>
    </citation>
    <scope>GENE FAMILY</scope>
    <source>
        <strain>cv. Columbia</strain>
    </source>
</reference>
<reference key="8">
    <citation type="journal article" date="2009" name="Biosci. Biotechnol. Biochem.">
        <title>Genome-wide identification, structure and expression studies, and mutant collection of 22 early nodulin-like protein genes in Arabidopsis.</title>
        <authorList>
            <person name="Mashiguchi K."/>
            <person name="Asami T."/>
            <person name="Suzuki Y."/>
        </authorList>
    </citation>
    <scope>GENE FAMILY</scope>
    <scope>NOMENCLATURE</scope>
    <source>
        <strain>cv. Columbia</strain>
    </source>
</reference>
<reference key="9">
    <citation type="journal article" date="2014" name="Plant Cell Physiol.">
        <title>Emerging functions of nodulin-like proteins in non-nodulating plant species.</title>
        <authorList>
            <person name="Denance N."/>
            <person name="Szurek B."/>
            <person name="Noel L.D."/>
        </authorList>
    </citation>
    <scope>REVIEW ON NODULIN-LIKE PROTEINS</scope>
</reference>
<dbReference type="EMBL" id="X97023">
    <property type="protein sequence ID" value="CAA65750.1"/>
    <property type="molecule type" value="mRNA"/>
</dbReference>
<dbReference type="EMBL" id="U77721">
    <property type="protein sequence ID" value="AAC32930.1"/>
    <property type="molecule type" value="mRNA"/>
</dbReference>
<dbReference type="EMBL" id="AL353993">
    <property type="protein sequence ID" value="CAB89345.1"/>
    <property type="molecule type" value="Genomic_DNA"/>
</dbReference>
<dbReference type="EMBL" id="CP002688">
    <property type="protein sequence ID" value="AED92152.1"/>
    <property type="molecule type" value="Genomic_DNA"/>
</dbReference>
<dbReference type="EMBL" id="BT002308">
    <property type="protein sequence ID" value="AAN73305.1"/>
    <property type="molecule type" value="mRNA"/>
</dbReference>
<dbReference type="EMBL" id="AF424627">
    <property type="protein sequence ID" value="AAL11620.1"/>
    <property type="molecule type" value="mRNA"/>
</dbReference>
<dbReference type="EMBL" id="AF083713">
    <property type="protein sequence ID" value="AAN60271.1"/>
    <property type="molecule type" value="mRNA"/>
</dbReference>
<dbReference type="PIR" id="S71273">
    <property type="entry name" value="S71273"/>
</dbReference>
<dbReference type="RefSeq" id="NP_197039.1">
    <property type="nucleotide sequence ID" value="NM_121539.4"/>
</dbReference>
<dbReference type="SMR" id="Q39131"/>
<dbReference type="BioGRID" id="16664">
    <property type="interactions" value="1"/>
</dbReference>
<dbReference type="FunCoup" id="Q39131">
    <property type="interactions" value="159"/>
</dbReference>
<dbReference type="IntAct" id="Q39131">
    <property type="interactions" value="1"/>
</dbReference>
<dbReference type="STRING" id="3702.Q39131"/>
<dbReference type="GlyGen" id="Q39131">
    <property type="glycosylation" value="4 sites"/>
</dbReference>
<dbReference type="iPTMnet" id="Q39131"/>
<dbReference type="PaxDb" id="3702-AT5G15350.1"/>
<dbReference type="ProteomicsDB" id="238407"/>
<dbReference type="EnsemblPlants" id="AT5G15350.1">
    <property type="protein sequence ID" value="AT5G15350.1"/>
    <property type="gene ID" value="AT5G15350"/>
</dbReference>
<dbReference type="GeneID" id="831387"/>
<dbReference type="Gramene" id="AT5G15350.1">
    <property type="protein sequence ID" value="AT5G15350.1"/>
    <property type="gene ID" value="AT5G15350"/>
</dbReference>
<dbReference type="KEGG" id="ath:AT5G15350"/>
<dbReference type="Araport" id="AT5G15350"/>
<dbReference type="TAIR" id="AT5G15350">
    <property type="gene designation" value="ENODL17"/>
</dbReference>
<dbReference type="eggNOG" id="ENOG502S1MH">
    <property type="taxonomic scope" value="Eukaryota"/>
</dbReference>
<dbReference type="HOGENOM" id="CLU_058719_3_0_1"/>
<dbReference type="InParanoid" id="Q39131"/>
<dbReference type="OMA" id="EGCIADH"/>
<dbReference type="OrthoDB" id="1851979at2759"/>
<dbReference type="PhylomeDB" id="Q39131"/>
<dbReference type="PRO" id="PR:Q39131"/>
<dbReference type="Proteomes" id="UP000006548">
    <property type="component" value="Chromosome 5"/>
</dbReference>
<dbReference type="ExpressionAtlas" id="Q39131">
    <property type="expression patterns" value="baseline and differential"/>
</dbReference>
<dbReference type="GO" id="GO:0000325">
    <property type="term" value="C:plant-type vacuole"/>
    <property type="evidence" value="ECO:0007005"/>
    <property type="project" value="TAIR"/>
</dbReference>
<dbReference type="GO" id="GO:0005886">
    <property type="term" value="C:plasma membrane"/>
    <property type="evidence" value="ECO:0007005"/>
    <property type="project" value="TAIR"/>
</dbReference>
<dbReference type="GO" id="GO:0009536">
    <property type="term" value="C:plastid"/>
    <property type="evidence" value="ECO:0007005"/>
    <property type="project" value="TAIR"/>
</dbReference>
<dbReference type="GO" id="GO:0098552">
    <property type="term" value="C:side of membrane"/>
    <property type="evidence" value="ECO:0007669"/>
    <property type="project" value="UniProtKB-KW"/>
</dbReference>
<dbReference type="GO" id="GO:0009055">
    <property type="term" value="F:electron transfer activity"/>
    <property type="evidence" value="ECO:0007669"/>
    <property type="project" value="InterPro"/>
</dbReference>
<dbReference type="CDD" id="cd11017">
    <property type="entry name" value="Phytocyanin_like_1"/>
    <property type="match status" value="1"/>
</dbReference>
<dbReference type="FunFam" id="2.60.40.420:FF:000018">
    <property type="entry name" value="Lamin-like protein"/>
    <property type="match status" value="1"/>
</dbReference>
<dbReference type="Gene3D" id="2.60.40.420">
    <property type="entry name" value="Cupredoxins - blue copper proteins"/>
    <property type="match status" value="1"/>
</dbReference>
<dbReference type="InterPro" id="IPR008972">
    <property type="entry name" value="Cupredoxin"/>
</dbReference>
<dbReference type="InterPro" id="IPR039391">
    <property type="entry name" value="Phytocyanin-like"/>
</dbReference>
<dbReference type="InterPro" id="IPR003245">
    <property type="entry name" value="Phytocyanin_dom"/>
</dbReference>
<dbReference type="PANTHER" id="PTHR33021">
    <property type="entry name" value="BLUE COPPER PROTEIN"/>
    <property type="match status" value="1"/>
</dbReference>
<dbReference type="PANTHER" id="PTHR33021:SF231">
    <property type="entry name" value="EARLY NODULIN-LIKE PROTEIN 17"/>
    <property type="match status" value="1"/>
</dbReference>
<dbReference type="Pfam" id="PF02298">
    <property type="entry name" value="Cu_bind_like"/>
    <property type="match status" value="1"/>
</dbReference>
<dbReference type="SUPFAM" id="SSF49503">
    <property type="entry name" value="Cupredoxins"/>
    <property type="match status" value="1"/>
</dbReference>
<dbReference type="PROSITE" id="PS51485">
    <property type="entry name" value="PHYTOCYANIN"/>
    <property type="match status" value="1"/>
</dbReference>
<organism>
    <name type="scientific">Arabidopsis thaliana</name>
    <name type="common">Mouse-ear cress</name>
    <dbReference type="NCBI Taxonomy" id="3702"/>
    <lineage>
        <taxon>Eukaryota</taxon>
        <taxon>Viridiplantae</taxon>
        <taxon>Streptophyta</taxon>
        <taxon>Embryophyta</taxon>
        <taxon>Tracheophyta</taxon>
        <taxon>Spermatophyta</taxon>
        <taxon>Magnoliopsida</taxon>
        <taxon>eudicotyledons</taxon>
        <taxon>Gunneridae</taxon>
        <taxon>Pentapetalae</taxon>
        <taxon>rosids</taxon>
        <taxon>malvids</taxon>
        <taxon>Brassicales</taxon>
        <taxon>Brassicaceae</taxon>
        <taxon>Camelineae</taxon>
        <taxon>Arabidopsis</taxon>
    </lineage>
</organism>